<dbReference type="EMBL" id="AM295007">
    <property type="protein sequence ID" value="CAM30213.1"/>
    <property type="molecule type" value="Genomic_DNA"/>
</dbReference>
<dbReference type="RefSeq" id="WP_011888858.1">
    <property type="nucleotide sequence ID" value="NC_009332.1"/>
</dbReference>
<dbReference type="SMR" id="A2RED8"/>
<dbReference type="KEGG" id="spf:SpyM50885"/>
<dbReference type="HOGENOM" id="CLU_027562_9_6_9"/>
<dbReference type="GO" id="GO:0005737">
    <property type="term" value="C:cytoplasm"/>
    <property type="evidence" value="ECO:0007669"/>
    <property type="project" value="UniProtKB-SubCell"/>
</dbReference>
<dbReference type="GO" id="GO:0003677">
    <property type="term" value="F:DNA binding"/>
    <property type="evidence" value="ECO:0007669"/>
    <property type="project" value="UniProtKB-KW"/>
</dbReference>
<dbReference type="GO" id="GO:0009037">
    <property type="term" value="F:tyrosine-based site-specific recombinase activity"/>
    <property type="evidence" value="ECO:0007669"/>
    <property type="project" value="UniProtKB-UniRule"/>
</dbReference>
<dbReference type="GO" id="GO:0051301">
    <property type="term" value="P:cell division"/>
    <property type="evidence" value="ECO:0007669"/>
    <property type="project" value="UniProtKB-KW"/>
</dbReference>
<dbReference type="GO" id="GO:0007059">
    <property type="term" value="P:chromosome segregation"/>
    <property type="evidence" value="ECO:0007669"/>
    <property type="project" value="UniProtKB-UniRule"/>
</dbReference>
<dbReference type="GO" id="GO:0006310">
    <property type="term" value="P:DNA recombination"/>
    <property type="evidence" value="ECO:0007669"/>
    <property type="project" value="UniProtKB-UniRule"/>
</dbReference>
<dbReference type="CDD" id="cd00397">
    <property type="entry name" value="DNA_BRE_C"/>
    <property type="match status" value="1"/>
</dbReference>
<dbReference type="Gene3D" id="1.10.150.130">
    <property type="match status" value="1"/>
</dbReference>
<dbReference type="Gene3D" id="1.10.443.10">
    <property type="entry name" value="Intergrase catalytic core"/>
    <property type="match status" value="1"/>
</dbReference>
<dbReference type="HAMAP" id="MF_01816">
    <property type="entry name" value="Recomb_XerS"/>
    <property type="match status" value="1"/>
</dbReference>
<dbReference type="InterPro" id="IPR044068">
    <property type="entry name" value="CB"/>
</dbReference>
<dbReference type="InterPro" id="IPR011010">
    <property type="entry name" value="DNA_brk_join_enz"/>
</dbReference>
<dbReference type="InterPro" id="IPR013762">
    <property type="entry name" value="Integrase-like_cat_sf"/>
</dbReference>
<dbReference type="InterPro" id="IPR002104">
    <property type="entry name" value="Integrase_catalytic"/>
</dbReference>
<dbReference type="InterPro" id="IPR010998">
    <property type="entry name" value="Integrase_recombinase_N"/>
</dbReference>
<dbReference type="InterPro" id="IPR004107">
    <property type="entry name" value="Integrase_SAM-like_N"/>
</dbReference>
<dbReference type="InterPro" id="IPR023670">
    <property type="entry name" value="Recomb_XerS"/>
</dbReference>
<dbReference type="InterPro" id="IPR050090">
    <property type="entry name" value="Tyrosine_recombinase_XerCD"/>
</dbReference>
<dbReference type="NCBIfam" id="NF003462">
    <property type="entry name" value="PRK05084.1"/>
    <property type="match status" value="1"/>
</dbReference>
<dbReference type="PANTHER" id="PTHR30349">
    <property type="entry name" value="PHAGE INTEGRASE-RELATED"/>
    <property type="match status" value="1"/>
</dbReference>
<dbReference type="PANTHER" id="PTHR30349:SF77">
    <property type="entry name" value="TYROSINE RECOMBINASE XERC"/>
    <property type="match status" value="1"/>
</dbReference>
<dbReference type="Pfam" id="PF02899">
    <property type="entry name" value="Phage_int_SAM_1"/>
    <property type="match status" value="1"/>
</dbReference>
<dbReference type="Pfam" id="PF00589">
    <property type="entry name" value="Phage_integrase"/>
    <property type="match status" value="1"/>
</dbReference>
<dbReference type="SUPFAM" id="SSF56349">
    <property type="entry name" value="DNA breaking-rejoining enzymes"/>
    <property type="match status" value="1"/>
</dbReference>
<dbReference type="PROSITE" id="PS51900">
    <property type="entry name" value="CB"/>
    <property type="match status" value="1"/>
</dbReference>
<dbReference type="PROSITE" id="PS51898">
    <property type="entry name" value="TYR_RECOMBINASE"/>
    <property type="match status" value="1"/>
</dbReference>
<feature type="chain" id="PRO_1000070249" description="Tyrosine recombinase XerS">
    <location>
        <begin position="1"/>
        <end position="356"/>
    </location>
</feature>
<feature type="domain" description="Core-binding (CB)" evidence="3">
    <location>
        <begin position="16"/>
        <end position="121"/>
    </location>
</feature>
<feature type="domain" description="Tyr recombinase" evidence="2">
    <location>
        <begin position="169"/>
        <end position="354"/>
    </location>
</feature>
<feature type="active site" evidence="1">
    <location>
        <position position="210"/>
    </location>
</feature>
<feature type="active site" evidence="1">
    <location>
        <position position="234"/>
    </location>
</feature>
<feature type="active site" evidence="1">
    <location>
        <position position="306"/>
    </location>
</feature>
<feature type="active site" evidence="1">
    <location>
        <position position="309"/>
    </location>
</feature>
<feature type="active site" evidence="1">
    <location>
        <position position="332"/>
    </location>
</feature>
<feature type="active site" description="O-(3'-phospho-DNA)-tyrosine intermediate" evidence="1">
    <location>
        <position position="341"/>
    </location>
</feature>
<keyword id="KW-0131">Cell cycle</keyword>
<keyword id="KW-0132">Cell division</keyword>
<keyword id="KW-0159">Chromosome partition</keyword>
<keyword id="KW-0963">Cytoplasm</keyword>
<keyword id="KW-0229">DNA integration</keyword>
<keyword id="KW-0233">DNA recombination</keyword>
<keyword id="KW-0238">DNA-binding</keyword>
<evidence type="ECO:0000255" key="1">
    <source>
        <dbReference type="HAMAP-Rule" id="MF_01816"/>
    </source>
</evidence>
<evidence type="ECO:0000255" key="2">
    <source>
        <dbReference type="PROSITE-ProRule" id="PRU01246"/>
    </source>
</evidence>
<evidence type="ECO:0000255" key="3">
    <source>
        <dbReference type="PROSITE-ProRule" id="PRU01248"/>
    </source>
</evidence>
<protein>
    <recommendedName>
        <fullName evidence="1">Tyrosine recombinase XerS</fullName>
    </recommendedName>
</protein>
<reference key="1">
    <citation type="journal article" date="2007" name="J. Bacteriol.">
        <title>Complete genome of acute rheumatic fever-associated serotype M5 Streptococcus pyogenes strain Manfredo.</title>
        <authorList>
            <person name="Holden M.T.G."/>
            <person name="Scott A."/>
            <person name="Cherevach I."/>
            <person name="Chillingworth T."/>
            <person name="Churcher C."/>
            <person name="Cronin A."/>
            <person name="Dowd L."/>
            <person name="Feltwell T."/>
            <person name="Hamlin N."/>
            <person name="Holroyd S."/>
            <person name="Jagels K."/>
            <person name="Moule S."/>
            <person name="Mungall K."/>
            <person name="Quail M.A."/>
            <person name="Price C."/>
            <person name="Rabbinowitsch E."/>
            <person name="Sharp S."/>
            <person name="Skelton J."/>
            <person name="Whitehead S."/>
            <person name="Barrell B.G."/>
            <person name="Kehoe M."/>
            <person name="Parkhill J."/>
        </authorList>
    </citation>
    <scope>NUCLEOTIDE SEQUENCE [LARGE SCALE GENOMIC DNA]</scope>
    <source>
        <strain>Manfredo</strain>
    </source>
</reference>
<sequence length="356" mass="41473">MRRELLLEKIETYKAIMPWYVLDYYQSKLAVPYSFTTLYEYLKEYKRFFDWLMDADLTQAPKIADIDLSTLEHLTKNDLEAFVLYLRERPSLNTYSTKEGLSQTTINRTLSALSSLYKYLTEEVENDQGEPYFYRNVMKKVSTKKKKETLASRAENIKQKLFLGDETLAFLDYVDKEYEQKLSNRAKSSFRKNKERDLAIISLLLASGVRLSEAVNLDLKDVNLNMMIIEVIRKGGKRDSVNVAGFAKGYLESYLAVRQRRYKAEKQDLAFFLTEYRGVPNRMDASSIEKMVGKYSEDFKIRVTPHKLRHTLATRLYDATKSQVLVSHQLGHSSTQVTDLYTHIVNDEQKNALDNL</sequence>
<organism>
    <name type="scientific">Streptococcus pyogenes serotype M5 (strain Manfredo)</name>
    <dbReference type="NCBI Taxonomy" id="160491"/>
    <lineage>
        <taxon>Bacteria</taxon>
        <taxon>Bacillati</taxon>
        <taxon>Bacillota</taxon>
        <taxon>Bacilli</taxon>
        <taxon>Lactobacillales</taxon>
        <taxon>Streptococcaceae</taxon>
        <taxon>Streptococcus</taxon>
    </lineage>
</organism>
<accession>A2RED8</accession>
<gene>
    <name evidence="1" type="primary">xerS</name>
    <name type="ordered locus">SpyM50885</name>
</gene>
<comment type="function">
    <text evidence="1">Site-specific tyrosine recombinase, which acts by catalyzing the cutting and rejoining of the recombining DNA molecules. Essential to convert dimers of the bacterial chromosome into monomers to permit their segregation at cell division.</text>
</comment>
<comment type="activity regulation">
    <text evidence="1">FtsK is required for recombination.</text>
</comment>
<comment type="subcellular location">
    <subcellularLocation>
        <location evidence="1">Cytoplasm</location>
    </subcellularLocation>
</comment>
<comment type="similarity">
    <text evidence="1">Belongs to the 'phage' integrase family. XerS subfamily.</text>
</comment>
<name>XERS_STRPG</name>
<proteinExistence type="inferred from homology"/>